<dbReference type="EMBL" id="CP017628">
    <property type="protein sequence ID" value="AOW30078.1"/>
    <property type="molecule type" value="Genomic_DNA"/>
</dbReference>
<dbReference type="RefSeq" id="XP_716754.1">
    <property type="nucleotide sequence ID" value="XM_711661.1"/>
</dbReference>
<dbReference type="FunCoup" id="Q5A4J4">
    <property type="interactions" value="47"/>
</dbReference>
<dbReference type="STRING" id="237561.Q5A4J4"/>
<dbReference type="GlyCosmos" id="Q5A4J4">
    <property type="glycosylation" value="10 sites, No reported glycans"/>
</dbReference>
<dbReference type="EnsemblFungi" id="C6_01370W_A-T">
    <property type="protein sequence ID" value="C6_01370W_A-T-p1"/>
    <property type="gene ID" value="C6_01370W_A"/>
</dbReference>
<dbReference type="GeneID" id="3641607"/>
<dbReference type="KEGG" id="cal:CAALFM_C601370WA"/>
<dbReference type="CGD" id="CAL0000174087">
    <property type="gene designation" value="orf19.10951"/>
</dbReference>
<dbReference type="VEuPathDB" id="FungiDB:C6_01370W_A"/>
<dbReference type="HOGENOM" id="CLU_044602_0_0_1"/>
<dbReference type="InParanoid" id="Q5A4J4"/>
<dbReference type="OrthoDB" id="5546453at2759"/>
<dbReference type="UniPathway" id="UPA00196"/>
<dbReference type="PRO" id="PR:Q5A4J4"/>
<dbReference type="Proteomes" id="UP000000559">
    <property type="component" value="Chromosome 6"/>
</dbReference>
<dbReference type="GO" id="GO:0005789">
    <property type="term" value="C:endoplasmic reticulum membrane"/>
    <property type="evidence" value="ECO:0007669"/>
    <property type="project" value="UniProtKB-SubCell"/>
</dbReference>
<dbReference type="GO" id="GO:1990529">
    <property type="term" value="C:glycosylphosphatidylinositol-mannosyltransferase I complex"/>
    <property type="evidence" value="ECO:0000318"/>
    <property type="project" value="GO_Central"/>
</dbReference>
<dbReference type="GO" id="GO:0006506">
    <property type="term" value="P:GPI anchor biosynthetic process"/>
    <property type="evidence" value="ECO:0000318"/>
    <property type="project" value="GO_Central"/>
</dbReference>
<dbReference type="InterPro" id="IPR042322">
    <property type="entry name" value="Pbn1"/>
</dbReference>
<dbReference type="InterPro" id="IPR013233">
    <property type="entry name" value="PIG-X/PBN1"/>
</dbReference>
<dbReference type="PANTHER" id="PTHR28533">
    <property type="entry name" value="PROTEIN PBN1"/>
    <property type="match status" value="1"/>
</dbReference>
<dbReference type="PANTHER" id="PTHR28533:SF1">
    <property type="entry name" value="PROTEIN PBN1"/>
    <property type="match status" value="1"/>
</dbReference>
<dbReference type="Pfam" id="PF08320">
    <property type="entry name" value="PIG-X"/>
    <property type="match status" value="1"/>
</dbReference>
<dbReference type="SMART" id="SM00780">
    <property type="entry name" value="PIG-X"/>
    <property type="match status" value="1"/>
</dbReference>
<reference key="1">
    <citation type="journal article" date="2004" name="Proc. Natl. Acad. Sci. U.S.A.">
        <title>The diploid genome sequence of Candida albicans.</title>
        <authorList>
            <person name="Jones T."/>
            <person name="Federspiel N.A."/>
            <person name="Chibana H."/>
            <person name="Dungan J."/>
            <person name="Kalman S."/>
            <person name="Magee B.B."/>
            <person name="Newport G."/>
            <person name="Thorstenson Y.R."/>
            <person name="Agabian N."/>
            <person name="Magee P.T."/>
            <person name="Davis R.W."/>
            <person name="Scherer S."/>
        </authorList>
    </citation>
    <scope>NUCLEOTIDE SEQUENCE [LARGE SCALE GENOMIC DNA]</scope>
    <source>
        <strain>SC5314 / ATCC MYA-2876</strain>
    </source>
</reference>
<reference key="2">
    <citation type="journal article" date="2007" name="Genome Biol.">
        <title>Assembly of the Candida albicans genome into sixteen supercontigs aligned on the eight chromosomes.</title>
        <authorList>
            <person name="van het Hoog M."/>
            <person name="Rast T.J."/>
            <person name="Martchenko M."/>
            <person name="Grindle S."/>
            <person name="Dignard D."/>
            <person name="Hogues H."/>
            <person name="Cuomo C."/>
            <person name="Berriman M."/>
            <person name="Scherer S."/>
            <person name="Magee B.B."/>
            <person name="Whiteway M."/>
            <person name="Chibana H."/>
            <person name="Nantel A."/>
            <person name="Magee P.T."/>
        </authorList>
    </citation>
    <scope>GENOME REANNOTATION</scope>
    <source>
        <strain>SC5314 / ATCC MYA-2876</strain>
    </source>
</reference>
<reference key="3">
    <citation type="journal article" date="2013" name="Genome Biol.">
        <title>Assembly of a phased diploid Candida albicans genome facilitates allele-specific measurements and provides a simple model for repeat and indel structure.</title>
        <authorList>
            <person name="Muzzey D."/>
            <person name="Schwartz K."/>
            <person name="Weissman J.S."/>
            <person name="Sherlock G."/>
        </authorList>
    </citation>
    <scope>NUCLEOTIDE SEQUENCE [LARGE SCALE GENOMIC DNA]</scope>
    <scope>GENOME REANNOTATION</scope>
    <source>
        <strain>SC5314 / ATCC MYA-2876</strain>
    </source>
</reference>
<proteinExistence type="inferred from homology"/>
<gene>
    <name type="primary">PBN1</name>
    <name type="ordered locus">CAALFM_C601370WA</name>
    <name type="ORF">CaO19.10951</name>
    <name type="ORF">CaO19.3447</name>
</gene>
<feature type="chain" id="PRO_0000246301" description="Protein PBN1">
    <location>
        <begin position="1"/>
        <end position="481"/>
    </location>
</feature>
<feature type="topological domain" description="Lumenal" evidence="2">
    <location>
        <begin position="1"/>
        <end position="451"/>
    </location>
</feature>
<feature type="transmembrane region" description="Helical" evidence="2">
    <location>
        <begin position="452"/>
        <end position="472"/>
    </location>
</feature>
<feature type="topological domain" description="Cytoplasmic" evidence="2">
    <location>
        <begin position="473"/>
        <end position="481"/>
    </location>
</feature>
<feature type="glycosylation site" description="N-linked (GlcNAc...) asparagine" evidence="3">
    <location>
        <position position="22"/>
    </location>
</feature>
<feature type="glycosylation site" description="N-linked (GlcNAc...) asparagine" evidence="3">
    <location>
        <position position="52"/>
    </location>
</feature>
<feature type="glycosylation site" description="N-linked (GlcNAc...) asparagine" evidence="3">
    <location>
        <position position="72"/>
    </location>
</feature>
<feature type="glycosylation site" description="N-linked (GlcNAc...) asparagine" evidence="3">
    <location>
        <position position="174"/>
    </location>
</feature>
<feature type="glycosylation site" description="N-linked (GlcNAc...) asparagine" evidence="3">
    <location>
        <position position="206"/>
    </location>
</feature>
<feature type="glycosylation site" description="N-linked (GlcNAc...) asparagine" evidence="3">
    <location>
        <position position="266"/>
    </location>
</feature>
<feature type="glycosylation site" description="N-linked (GlcNAc...) asparagine" evidence="3">
    <location>
        <position position="290"/>
    </location>
</feature>
<feature type="glycosylation site" description="N-linked (GlcNAc...) asparagine" evidence="3">
    <location>
        <position position="347"/>
    </location>
</feature>
<feature type="glycosylation site" description="N-linked (GlcNAc...) asparagine" evidence="3">
    <location>
        <position position="360"/>
    </location>
</feature>
<feature type="glycosylation site" description="N-linked (GlcNAc...) asparagine" evidence="3">
    <location>
        <position position="449"/>
    </location>
</feature>
<sequence length="481" mass="55568">MRQRTTIYNPYSSHDGIITNLNRTNFQLSSIPNHLFTIENKYTITTTTTQPNKSSLYSAIKELRIQTKFNNNESGIPIFSFHYEPGLNIYAVPQSNVDKLEFWQQVEQLIMELLGIKLSSQQWIANVNSFYYHDIQPQPLLNLKEGWKFNLHPKSNYDYIYNQDKIIIRELLTNVSEIEFNLESGIYKEIGLFLIDEKISTNDDLNLSGIRVILDEDSNTNNKEESIHKTMFHIKPRHRSFDDSTTITTTKIIPQGLHPILSTELNTTTIVIPTDFDVEECKFYYYLNLNKSLIFDQFQNIPIGSQLIINNGNKNLELPEYKINQWGNELLFEFEFDNDNDIPHHINLTVHSRYQLPQNNHSHSQISNVLNSLPNIFIGCNVKEGNLLDKSPFDTKRDVKIGGNYEIYFTEDTVFYHLQNSDNSGNSGSSTLLEINIPHGKTTFDRVNNITSLGLLIGVLMILYAISIRVFMSTTSKTKRD</sequence>
<comment type="function">
    <text evidence="1">Required for proper folding and/or the stability of a subset of proteins in the endoplasmic reticulum. Component of glycosylphosphatidylinositol-mannosyltransferase 1 which transfers the first of the 4 mannoses in the GPI-anchor precursors during GPI-anchor biosynthesis. Probably acts by stabilizing the mannosyltransferase GPI14 (By similarity).</text>
</comment>
<comment type="pathway">
    <text>Glycolipid biosynthesis; glycosylphosphatidylinositol-anchor biosynthesis.</text>
</comment>
<comment type="subcellular location">
    <subcellularLocation>
        <location evidence="1">Endoplasmic reticulum membrane</location>
        <topology evidence="1">Single-pass type III membrane protein</topology>
    </subcellularLocation>
</comment>
<comment type="similarity">
    <text evidence="4">Belongs to the PIGX family.</text>
</comment>
<evidence type="ECO:0000250" key="1"/>
<evidence type="ECO:0000255" key="2"/>
<evidence type="ECO:0000255" key="3">
    <source>
        <dbReference type="PROSITE-ProRule" id="PRU00498"/>
    </source>
</evidence>
<evidence type="ECO:0000305" key="4"/>
<keyword id="KW-0256">Endoplasmic reticulum</keyword>
<keyword id="KW-0325">Glycoprotein</keyword>
<keyword id="KW-0337">GPI-anchor biosynthesis</keyword>
<keyword id="KW-0472">Membrane</keyword>
<keyword id="KW-1185">Reference proteome</keyword>
<keyword id="KW-0812">Transmembrane</keyword>
<keyword id="KW-1133">Transmembrane helix</keyword>
<protein>
    <recommendedName>
        <fullName>Protein PBN1</fullName>
    </recommendedName>
</protein>
<name>PBN1_CANAL</name>
<accession>Q5A4J4</accession>
<accession>A0A1D8PPL2</accession>
<accession>Q5A4Q8</accession>
<organism>
    <name type="scientific">Candida albicans (strain SC5314 / ATCC MYA-2876)</name>
    <name type="common">Yeast</name>
    <dbReference type="NCBI Taxonomy" id="237561"/>
    <lineage>
        <taxon>Eukaryota</taxon>
        <taxon>Fungi</taxon>
        <taxon>Dikarya</taxon>
        <taxon>Ascomycota</taxon>
        <taxon>Saccharomycotina</taxon>
        <taxon>Pichiomycetes</taxon>
        <taxon>Debaryomycetaceae</taxon>
        <taxon>Candida/Lodderomyces clade</taxon>
        <taxon>Candida</taxon>
    </lineage>
</organism>